<evidence type="ECO:0000255" key="1">
    <source>
        <dbReference type="HAMAP-Rule" id="MF_01331"/>
    </source>
</evidence>
<evidence type="ECO:0000305" key="2"/>
<keyword id="KW-0687">Ribonucleoprotein</keyword>
<keyword id="KW-0689">Ribosomal protein</keyword>
<keyword id="KW-0694">RNA-binding</keyword>
<keyword id="KW-0699">rRNA-binding</keyword>
<reference key="1">
    <citation type="submission" date="2005-09" db="EMBL/GenBank/DDBJ databases">
        <title>Complete genome sequence of Clostridium kluyveri and comparative genomics of Clostridia species.</title>
        <authorList>
            <person name="Inui M."/>
            <person name="Nonaka H."/>
            <person name="Shinoda Y."/>
            <person name="Ikenaga Y."/>
            <person name="Abe M."/>
            <person name="Naito K."/>
            <person name="Vertes A.A."/>
            <person name="Yukawa H."/>
        </authorList>
    </citation>
    <scope>NUCLEOTIDE SEQUENCE [LARGE SCALE GENOMIC DNA]</scope>
    <source>
        <strain>NBRC 12016</strain>
    </source>
</reference>
<accession>B9DYB4</accession>
<sequence length="111" mass="12545">MEAKAIAKYVRMSSMKVRVVLNLVRGKNVNEAFAILKYTPRDAAVVVNKLLKSAVANAENNLDLNRDTLYISEAYACEGPTLKRFQPHAQGRAFRINKRSSHITLIVKERE</sequence>
<dbReference type="EMBL" id="AP009049">
    <property type="protein sequence ID" value="BAH05239.1"/>
    <property type="molecule type" value="Genomic_DNA"/>
</dbReference>
<dbReference type="RefSeq" id="WP_011988808.1">
    <property type="nucleotide sequence ID" value="NC_011837.1"/>
</dbReference>
<dbReference type="SMR" id="B9DYB4"/>
<dbReference type="KEGG" id="ckr:CKR_0188"/>
<dbReference type="HOGENOM" id="CLU_083987_3_3_9"/>
<dbReference type="Proteomes" id="UP000007969">
    <property type="component" value="Chromosome"/>
</dbReference>
<dbReference type="GO" id="GO:0022625">
    <property type="term" value="C:cytosolic large ribosomal subunit"/>
    <property type="evidence" value="ECO:0007669"/>
    <property type="project" value="TreeGrafter"/>
</dbReference>
<dbReference type="GO" id="GO:0019843">
    <property type="term" value="F:rRNA binding"/>
    <property type="evidence" value="ECO:0007669"/>
    <property type="project" value="UniProtKB-UniRule"/>
</dbReference>
<dbReference type="GO" id="GO:0003735">
    <property type="term" value="F:structural constituent of ribosome"/>
    <property type="evidence" value="ECO:0007669"/>
    <property type="project" value="InterPro"/>
</dbReference>
<dbReference type="GO" id="GO:0006412">
    <property type="term" value="P:translation"/>
    <property type="evidence" value="ECO:0007669"/>
    <property type="project" value="UniProtKB-UniRule"/>
</dbReference>
<dbReference type="CDD" id="cd00336">
    <property type="entry name" value="Ribosomal_L22"/>
    <property type="match status" value="1"/>
</dbReference>
<dbReference type="FunFam" id="3.90.470.10:FF:000011">
    <property type="entry name" value="50S ribosomal protein L22"/>
    <property type="match status" value="1"/>
</dbReference>
<dbReference type="Gene3D" id="3.90.470.10">
    <property type="entry name" value="Ribosomal protein L22/L17"/>
    <property type="match status" value="1"/>
</dbReference>
<dbReference type="HAMAP" id="MF_01331_B">
    <property type="entry name" value="Ribosomal_uL22_B"/>
    <property type="match status" value="1"/>
</dbReference>
<dbReference type="InterPro" id="IPR001063">
    <property type="entry name" value="Ribosomal_uL22"/>
</dbReference>
<dbReference type="InterPro" id="IPR005727">
    <property type="entry name" value="Ribosomal_uL22_bac/chlpt-type"/>
</dbReference>
<dbReference type="InterPro" id="IPR047867">
    <property type="entry name" value="Ribosomal_uL22_bac/org-type"/>
</dbReference>
<dbReference type="InterPro" id="IPR018260">
    <property type="entry name" value="Ribosomal_uL22_CS"/>
</dbReference>
<dbReference type="InterPro" id="IPR036394">
    <property type="entry name" value="Ribosomal_uL22_sf"/>
</dbReference>
<dbReference type="NCBIfam" id="TIGR01044">
    <property type="entry name" value="rplV_bact"/>
    <property type="match status" value="1"/>
</dbReference>
<dbReference type="PANTHER" id="PTHR13501">
    <property type="entry name" value="CHLOROPLAST 50S RIBOSOMAL PROTEIN L22-RELATED"/>
    <property type="match status" value="1"/>
</dbReference>
<dbReference type="PANTHER" id="PTHR13501:SF8">
    <property type="entry name" value="LARGE RIBOSOMAL SUBUNIT PROTEIN UL22M"/>
    <property type="match status" value="1"/>
</dbReference>
<dbReference type="Pfam" id="PF00237">
    <property type="entry name" value="Ribosomal_L22"/>
    <property type="match status" value="1"/>
</dbReference>
<dbReference type="SUPFAM" id="SSF54843">
    <property type="entry name" value="Ribosomal protein L22"/>
    <property type="match status" value="1"/>
</dbReference>
<dbReference type="PROSITE" id="PS00464">
    <property type="entry name" value="RIBOSOMAL_L22"/>
    <property type="match status" value="1"/>
</dbReference>
<gene>
    <name evidence="1" type="primary">rplV</name>
    <name type="ordered locus">CKR_0188</name>
</gene>
<organism>
    <name type="scientific">Clostridium kluyveri (strain NBRC 12016)</name>
    <dbReference type="NCBI Taxonomy" id="583346"/>
    <lineage>
        <taxon>Bacteria</taxon>
        <taxon>Bacillati</taxon>
        <taxon>Bacillota</taxon>
        <taxon>Clostridia</taxon>
        <taxon>Eubacteriales</taxon>
        <taxon>Clostridiaceae</taxon>
        <taxon>Clostridium</taxon>
    </lineage>
</organism>
<comment type="function">
    <text evidence="1">This protein binds specifically to 23S rRNA; its binding is stimulated by other ribosomal proteins, e.g. L4, L17, and L20. It is important during the early stages of 50S assembly. It makes multiple contacts with different domains of the 23S rRNA in the assembled 50S subunit and ribosome (By similarity).</text>
</comment>
<comment type="function">
    <text evidence="1">The globular domain of the protein is located near the polypeptide exit tunnel on the outside of the subunit, while an extended beta-hairpin is found that lines the wall of the exit tunnel in the center of the 70S ribosome.</text>
</comment>
<comment type="subunit">
    <text evidence="1">Part of the 50S ribosomal subunit.</text>
</comment>
<comment type="similarity">
    <text evidence="1">Belongs to the universal ribosomal protein uL22 family.</text>
</comment>
<name>RL22_CLOK1</name>
<feature type="chain" id="PRO_1000166054" description="Large ribosomal subunit protein uL22">
    <location>
        <begin position="1"/>
        <end position="111"/>
    </location>
</feature>
<proteinExistence type="inferred from homology"/>
<protein>
    <recommendedName>
        <fullName evidence="1">Large ribosomal subunit protein uL22</fullName>
    </recommendedName>
    <alternativeName>
        <fullName evidence="2">50S ribosomal protein L22</fullName>
    </alternativeName>
</protein>